<evidence type="ECO:0000255" key="1"/>
<evidence type="ECO:0000303" key="2">
    <source>
    </source>
</evidence>
<evidence type="ECO:0000305" key="3"/>
<evidence type="ECO:0000305" key="4">
    <source>
    </source>
</evidence>
<sequence length="77" mass="8166">MTKLTVLLLAILVLLPLATSNSAADEALASLSGLLRRAKRCVPQNSCTSNADCCGSYTCSCVSQPSCKGMNPRRRCM</sequence>
<proteinExistence type="inferred from homology"/>
<name>TF4_TERSU</name>
<protein>
    <recommendedName>
        <fullName evidence="2">Teretoxin Tsu15.4</fullName>
    </recommendedName>
</protein>
<dbReference type="TCDB" id="8.B.16.4.3">
    <property type="family name" value="the maurocalcine (maca) family"/>
</dbReference>
<dbReference type="GO" id="GO:0005576">
    <property type="term" value="C:extracellular region"/>
    <property type="evidence" value="ECO:0007669"/>
    <property type="project" value="UniProtKB-SubCell"/>
</dbReference>
<dbReference type="GO" id="GO:0090729">
    <property type="term" value="F:toxin activity"/>
    <property type="evidence" value="ECO:0007669"/>
    <property type="project" value="UniProtKB-KW"/>
</dbReference>
<feature type="signal peptide" evidence="1">
    <location>
        <begin position="1"/>
        <end position="21"/>
    </location>
</feature>
<feature type="propeptide" id="PRO_0000435091" evidence="3">
    <location>
        <begin position="22"/>
        <end position="40"/>
    </location>
</feature>
<feature type="chain" id="PRO_0000435092" description="Teretoxin Tsu15.4">
    <location>
        <begin position="41"/>
        <end position="77"/>
    </location>
</feature>
<reference key="1">
    <citation type="journal article" date="2015" name="Genome Biol. Evol.">
        <title>Molecular diversity and gene evolution of the venom arsenal of Terebridae predatory marine snails.</title>
        <authorList>
            <person name="Gorson J."/>
            <person name="Ramrattan G."/>
            <person name="Verdes A."/>
            <person name="Wright E.M."/>
            <person name="Kantor Y."/>
            <person name="Rajaram Srinivasan R."/>
            <person name="Musunuri R."/>
            <person name="Packer D."/>
            <person name="Albano G."/>
            <person name="Qiu W.G."/>
            <person name="Holford M."/>
        </authorList>
    </citation>
    <scope>NUCLEOTIDE SEQUENCE [MRNA]</scope>
    <source>
        <tissue>Venom duct</tissue>
    </source>
</reference>
<comment type="subcellular location">
    <subcellularLocation>
        <location evidence="4">Secreted</location>
    </subcellularLocation>
</comment>
<comment type="tissue specificity">
    <text evidence="4">Expressed by the venom duct.</text>
</comment>
<comment type="domain">
    <text>The cysteine framework is XV (C-C-CC-C-C-C-C).</text>
</comment>
<comment type="PTM">
    <text evidence="3">Contains 4 disulfide bonds.</text>
</comment>
<keyword id="KW-0165">Cleavage on pair of basic residues</keyword>
<keyword id="KW-1015">Disulfide bond</keyword>
<keyword id="KW-0964">Secreted</keyword>
<keyword id="KW-0732">Signal</keyword>
<keyword id="KW-0800">Toxin</keyword>
<organism>
    <name type="scientific">Terebra subulata</name>
    <name type="common">Chocolate spotted auger</name>
    <name type="synonym">Buccinum subulatum</name>
    <dbReference type="NCBI Taxonomy" id="89435"/>
    <lineage>
        <taxon>Eukaryota</taxon>
        <taxon>Metazoa</taxon>
        <taxon>Spiralia</taxon>
        <taxon>Lophotrochozoa</taxon>
        <taxon>Mollusca</taxon>
        <taxon>Gastropoda</taxon>
        <taxon>Caenogastropoda</taxon>
        <taxon>Neogastropoda</taxon>
        <taxon>Conoidea</taxon>
        <taxon>Terebridae</taxon>
        <taxon>Terebra</taxon>
    </lineage>
</organism>
<accession>P0DN62</accession>